<reference key="1">
    <citation type="journal article" date="2005" name="J. Bacteriol.">
        <title>Insights into genome plasticity and pathogenicity of the plant pathogenic Bacterium Xanthomonas campestris pv. vesicatoria revealed by the complete genome sequence.</title>
        <authorList>
            <person name="Thieme F."/>
            <person name="Koebnik R."/>
            <person name="Bekel T."/>
            <person name="Berger C."/>
            <person name="Boch J."/>
            <person name="Buettner D."/>
            <person name="Caldana C."/>
            <person name="Gaigalat L."/>
            <person name="Goesmann A."/>
            <person name="Kay S."/>
            <person name="Kirchner O."/>
            <person name="Lanz C."/>
            <person name="Linke B."/>
            <person name="McHardy A.C."/>
            <person name="Meyer F."/>
            <person name="Mittenhuber G."/>
            <person name="Nies D.H."/>
            <person name="Niesbach-Kloesgen U."/>
            <person name="Patschkowski T."/>
            <person name="Rueckert C."/>
            <person name="Rupp O."/>
            <person name="Schneiker S."/>
            <person name="Schuster S.C."/>
            <person name="Vorhoelter F.J."/>
            <person name="Weber E."/>
            <person name="Puehler A."/>
            <person name="Bonas U."/>
            <person name="Bartels D."/>
            <person name="Kaiser O."/>
        </authorList>
    </citation>
    <scope>NUCLEOTIDE SEQUENCE [LARGE SCALE GENOMIC DNA]</scope>
    <source>
        <strain>85-10</strain>
    </source>
</reference>
<accession>Q3BQS2</accession>
<proteinExistence type="inferred from homology"/>
<organism>
    <name type="scientific">Xanthomonas euvesicatoria pv. vesicatoria (strain 85-10)</name>
    <name type="common">Xanthomonas campestris pv. vesicatoria</name>
    <dbReference type="NCBI Taxonomy" id="316273"/>
    <lineage>
        <taxon>Bacteria</taxon>
        <taxon>Pseudomonadati</taxon>
        <taxon>Pseudomonadota</taxon>
        <taxon>Gammaproteobacteria</taxon>
        <taxon>Lysobacterales</taxon>
        <taxon>Lysobacteraceae</taxon>
        <taxon>Xanthomonas</taxon>
    </lineage>
</organism>
<comment type="function">
    <text evidence="1">Catalyzes the specific phosphorylation of the 3-hydroxyl group of shikimic acid using ATP as a cosubstrate.</text>
</comment>
<comment type="catalytic activity">
    <reaction evidence="1">
        <text>shikimate + ATP = 3-phosphoshikimate + ADP + H(+)</text>
        <dbReference type="Rhea" id="RHEA:13121"/>
        <dbReference type="ChEBI" id="CHEBI:15378"/>
        <dbReference type="ChEBI" id="CHEBI:30616"/>
        <dbReference type="ChEBI" id="CHEBI:36208"/>
        <dbReference type="ChEBI" id="CHEBI:145989"/>
        <dbReference type="ChEBI" id="CHEBI:456216"/>
        <dbReference type="EC" id="2.7.1.71"/>
    </reaction>
</comment>
<comment type="cofactor">
    <cofactor evidence="1">
        <name>Mg(2+)</name>
        <dbReference type="ChEBI" id="CHEBI:18420"/>
    </cofactor>
    <text evidence="1">Binds 1 Mg(2+) ion per subunit.</text>
</comment>
<comment type="pathway">
    <text evidence="1">Metabolic intermediate biosynthesis; chorismate biosynthesis; chorismate from D-erythrose 4-phosphate and phosphoenolpyruvate: step 5/7.</text>
</comment>
<comment type="subunit">
    <text evidence="1">Monomer.</text>
</comment>
<comment type="subcellular location">
    <subcellularLocation>
        <location evidence="1">Cytoplasm</location>
    </subcellularLocation>
</comment>
<comment type="similarity">
    <text evidence="1">Belongs to the shikimate kinase family.</text>
</comment>
<sequence length="180" mass="19945">MNPAPNLVMVGPMGAGKSCIGRRLAERFGLEFVDVDQAIVDQVGSSIPAIFEQHGEARFRQYEAQILQALLEQDNKLISTGGGAVLDPRNRERICARGFVVYLHVSVPAQLTRLARDRNRPLLQRADREQVLHAMAAHRTPLYRQVADLSLETDHLSPAEATAQLVLRLAAQWRMSSTPA</sequence>
<feature type="chain" id="PRO_0000237960" description="Shikimate kinase">
    <location>
        <begin position="1"/>
        <end position="180"/>
    </location>
</feature>
<feature type="binding site" evidence="1">
    <location>
        <begin position="14"/>
        <end position="19"/>
    </location>
    <ligand>
        <name>ATP</name>
        <dbReference type="ChEBI" id="CHEBI:30616"/>
    </ligand>
</feature>
<feature type="binding site" evidence="1">
    <location>
        <position position="18"/>
    </location>
    <ligand>
        <name>Mg(2+)</name>
        <dbReference type="ChEBI" id="CHEBI:18420"/>
    </ligand>
</feature>
<feature type="binding site" evidence="1">
    <location>
        <position position="36"/>
    </location>
    <ligand>
        <name>substrate</name>
    </ligand>
</feature>
<feature type="binding site" evidence="1">
    <location>
        <position position="60"/>
    </location>
    <ligand>
        <name>substrate</name>
    </ligand>
</feature>
<feature type="binding site" evidence="1">
    <location>
        <position position="82"/>
    </location>
    <ligand>
        <name>substrate</name>
    </ligand>
</feature>
<feature type="binding site" evidence="1">
    <location>
        <position position="120"/>
    </location>
    <ligand>
        <name>ATP</name>
        <dbReference type="ChEBI" id="CHEBI:30616"/>
    </ligand>
</feature>
<feature type="binding site" evidence="1">
    <location>
        <position position="139"/>
    </location>
    <ligand>
        <name>substrate</name>
    </ligand>
</feature>
<keyword id="KW-0028">Amino-acid biosynthesis</keyword>
<keyword id="KW-0057">Aromatic amino acid biosynthesis</keyword>
<keyword id="KW-0067">ATP-binding</keyword>
<keyword id="KW-0963">Cytoplasm</keyword>
<keyword id="KW-0418">Kinase</keyword>
<keyword id="KW-0460">Magnesium</keyword>
<keyword id="KW-0479">Metal-binding</keyword>
<keyword id="KW-0547">Nucleotide-binding</keyword>
<keyword id="KW-0808">Transferase</keyword>
<gene>
    <name evidence="1" type="primary">aroK</name>
    <name type="ordered locus">XCV3160</name>
</gene>
<dbReference type="EC" id="2.7.1.71" evidence="1"/>
<dbReference type="EMBL" id="AM039952">
    <property type="protein sequence ID" value="CAJ24891.1"/>
    <property type="molecule type" value="Genomic_DNA"/>
</dbReference>
<dbReference type="RefSeq" id="WP_011348183.1">
    <property type="nucleotide sequence ID" value="NZ_CP017190.1"/>
</dbReference>
<dbReference type="SMR" id="Q3BQS2"/>
<dbReference type="STRING" id="456327.BJD11_07010"/>
<dbReference type="KEGG" id="xcv:XCV3160"/>
<dbReference type="eggNOG" id="COG0703">
    <property type="taxonomic scope" value="Bacteria"/>
</dbReference>
<dbReference type="HOGENOM" id="CLU_057607_3_2_6"/>
<dbReference type="UniPathway" id="UPA00053">
    <property type="reaction ID" value="UER00088"/>
</dbReference>
<dbReference type="Proteomes" id="UP000007069">
    <property type="component" value="Chromosome"/>
</dbReference>
<dbReference type="GO" id="GO:0005829">
    <property type="term" value="C:cytosol"/>
    <property type="evidence" value="ECO:0007669"/>
    <property type="project" value="TreeGrafter"/>
</dbReference>
<dbReference type="GO" id="GO:0005524">
    <property type="term" value="F:ATP binding"/>
    <property type="evidence" value="ECO:0007669"/>
    <property type="project" value="UniProtKB-UniRule"/>
</dbReference>
<dbReference type="GO" id="GO:0000287">
    <property type="term" value="F:magnesium ion binding"/>
    <property type="evidence" value="ECO:0007669"/>
    <property type="project" value="UniProtKB-UniRule"/>
</dbReference>
<dbReference type="GO" id="GO:0004765">
    <property type="term" value="F:shikimate kinase activity"/>
    <property type="evidence" value="ECO:0007669"/>
    <property type="project" value="UniProtKB-UniRule"/>
</dbReference>
<dbReference type="GO" id="GO:0008652">
    <property type="term" value="P:amino acid biosynthetic process"/>
    <property type="evidence" value="ECO:0007669"/>
    <property type="project" value="UniProtKB-KW"/>
</dbReference>
<dbReference type="GO" id="GO:0009073">
    <property type="term" value="P:aromatic amino acid family biosynthetic process"/>
    <property type="evidence" value="ECO:0007669"/>
    <property type="project" value="UniProtKB-KW"/>
</dbReference>
<dbReference type="GO" id="GO:0009423">
    <property type="term" value="P:chorismate biosynthetic process"/>
    <property type="evidence" value="ECO:0007669"/>
    <property type="project" value="UniProtKB-UniRule"/>
</dbReference>
<dbReference type="CDD" id="cd00464">
    <property type="entry name" value="SK"/>
    <property type="match status" value="1"/>
</dbReference>
<dbReference type="Gene3D" id="3.40.50.300">
    <property type="entry name" value="P-loop containing nucleotide triphosphate hydrolases"/>
    <property type="match status" value="1"/>
</dbReference>
<dbReference type="HAMAP" id="MF_00109">
    <property type="entry name" value="Shikimate_kinase"/>
    <property type="match status" value="1"/>
</dbReference>
<dbReference type="InterPro" id="IPR027417">
    <property type="entry name" value="P-loop_NTPase"/>
</dbReference>
<dbReference type="InterPro" id="IPR031322">
    <property type="entry name" value="Shikimate/glucono_kinase"/>
</dbReference>
<dbReference type="InterPro" id="IPR000623">
    <property type="entry name" value="Shikimate_kinase/TSH1"/>
</dbReference>
<dbReference type="InterPro" id="IPR023000">
    <property type="entry name" value="Shikimate_kinase_CS"/>
</dbReference>
<dbReference type="PANTHER" id="PTHR21087">
    <property type="entry name" value="SHIKIMATE KINASE"/>
    <property type="match status" value="1"/>
</dbReference>
<dbReference type="PANTHER" id="PTHR21087:SF16">
    <property type="entry name" value="SHIKIMATE KINASE 1, CHLOROPLASTIC"/>
    <property type="match status" value="1"/>
</dbReference>
<dbReference type="Pfam" id="PF01202">
    <property type="entry name" value="SKI"/>
    <property type="match status" value="1"/>
</dbReference>
<dbReference type="PRINTS" id="PR01100">
    <property type="entry name" value="SHIKIMTKNASE"/>
</dbReference>
<dbReference type="SUPFAM" id="SSF52540">
    <property type="entry name" value="P-loop containing nucleoside triphosphate hydrolases"/>
    <property type="match status" value="1"/>
</dbReference>
<dbReference type="PROSITE" id="PS01128">
    <property type="entry name" value="SHIKIMATE_KINASE"/>
    <property type="match status" value="1"/>
</dbReference>
<name>AROK_XANE5</name>
<evidence type="ECO:0000255" key="1">
    <source>
        <dbReference type="HAMAP-Rule" id="MF_00109"/>
    </source>
</evidence>
<protein>
    <recommendedName>
        <fullName evidence="1">Shikimate kinase</fullName>
        <shortName evidence="1">SK</shortName>
        <ecNumber evidence="1">2.7.1.71</ecNumber>
    </recommendedName>
</protein>